<gene>
    <name type="primary">EMC1</name>
    <name type="synonym">KIAA0090</name>
    <name type="ORF">PSEC0263</name>
</gene>
<dbReference type="EMBL" id="AK075563">
    <property type="protein sequence ID" value="BAC11702.1"/>
    <property type="molecule type" value="mRNA"/>
</dbReference>
<dbReference type="EMBL" id="AK291618">
    <property type="protein sequence ID" value="BAF84307.1"/>
    <property type="molecule type" value="mRNA"/>
</dbReference>
<dbReference type="EMBL" id="BX648627">
    <property type="protein sequence ID" value="CAH56140.1"/>
    <property type="molecule type" value="mRNA"/>
</dbReference>
<dbReference type="EMBL" id="BX648708">
    <property type="protein sequence ID" value="CAH56165.1"/>
    <property type="molecule type" value="mRNA"/>
</dbReference>
<dbReference type="EMBL" id="AL035413">
    <property type="status" value="NOT_ANNOTATED_CDS"/>
    <property type="molecule type" value="Genomic_DNA"/>
</dbReference>
<dbReference type="EMBL" id="CH471134">
    <property type="protein sequence ID" value="EAW94871.1"/>
    <property type="molecule type" value="Genomic_DNA"/>
</dbReference>
<dbReference type="EMBL" id="BC034589">
    <property type="protein sequence ID" value="AAH34589.1"/>
    <property type="molecule type" value="mRNA"/>
</dbReference>
<dbReference type="EMBL" id="D42044">
    <property type="protein sequence ID" value="BAA07645.2"/>
    <property type="molecule type" value="mRNA"/>
</dbReference>
<dbReference type="CCDS" id="CCDS190.1">
    <molecule id="Q8N766-1"/>
</dbReference>
<dbReference type="CCDS" id="CCDS59190.1">
    <molecule id="Q8N766-4"/>
</dbReference>
<dbReference type="CCDS" id="CCDS59191.1">
    <molecule id="Q8N766-2"/>
</dbReference>
<dbReference type="RefSeq" id="NP_001258356.1">
    <molecule id="Q8N766-2"/>
    <property type="nucleotide sequence ID" value="NM_001271427.2"/>
</dbReference>
<dbReference type="RefSeq" id="NP_001258357.1">
    <molecule id="Q8N766-3"/>
    <property type="nucleotide sequence ID" value="NM_001271428.2"/>
</dbReference>
<dbReference type="RefSeq" id="NP_001258358.1">
    <molecule id="Q8N766-4"/>
    <property type="nucleotide sequence ID" value="NM_001271429.2"/>
</dbReference>
<dbReference type="RefSeq" id="NP_055862.1">
    <molecule id="Q8N766-1"/>
    <property type="nucleotide sequence ID" value="NM_015047.3"/>
</dbReference>
<dbReference type="PDB" id="6WW7">
    <property type="method" value="EM"/>
    <property type="resolution" value="3.40 A"/>
    <property type="chains" value="A=1-993"/>
</dbReference>
<dbReference type="PDB" id="6Z3W">
    <property type="method" value="EM"/>
    <property type="resolution" value="6.40 A"/>
    <property type="chains" value="A=482-510, A=960-993"/>
</dbReference>
<dbReference type="PDB" id="7ADO">
    <property type="method" value="EM"/>
    <property type="resolution" value="3.39 A"/>
    <property type="chains" value="A=1-993"/>
</dbReference>
<dbReference type="PDB" id="7ADP">
    <property type="method" value="EM"/>
    <property type="resolution" value="3.60 A"/>
    <property type="chains" value="A=1-993"/>
</dbReference>
<dbReference type="PDB" id="8EOI">
    <property type="method" value="EM"/>
    <property type="resolution" value="3.40 A"/>
    <property type="chains" value="A=21-993"/>
</dbReference>
<dbReference type="PDB" id="8J0N">
    <property type="method" value="EM"/>
    <property type="resolution" value="3.47 A"/>
    <property type="chains" value="A=1-993"/>
</dbReference>
<dbReference type="PDB" id="8J0O">
    <property type="method" value="EM"/>
    <property type="resolution" value="3.32 A"/>
    <property type="chains" value="A=1-993"/>
</dbReference>
<dbReference type="PDB" id="8S9S">
    <property type="method" value="EM"/>
    <property type="resolution" value="3.60 A"/>
    <property type="chains" value="1=1-993"/>
</dbReference>
<dbReference type="PDB" id="9C7V">
    <property type="method" value="EM"/>
    <property type="resolution" value="6.60 A"/>
    <property type="chains" value="1=1-993"/>
</dbReference>
<dbReference type="PDBsum" id="6WW7"/>
<dbReference type="PDBsum" id="6Z3W"/>
<dbReference type="PDBsum" id="7ADO"/>
<dbReference type="PDBsum" id="7ADP"/>
<dbReference type="PDBsum" id="8EOI"/>
<dbReference type="PDBsum" id="8J0N"/>
<dbReference type="PDBsum" id="8J0O"/>
<dbReference type="PDBsum" id="8S9S"/>
<dbReference type="PDBsum" id="9C7V"/>
<dbReference type="EMDB" id="EMD-11732"/>
<dbReference type="EMDB" id="EMD-11733"/>
<dbReference type="EMDB" id="EMD-21929"/>
<dbReference type="EMDB" id="EMD-28376"/>
<dbReference type="EMDB" id="EMD-35906"/>
<dbReference type="EMDB" id="EMD-35907"/>
<dbReference type="EMDB" id="EMD-40245"/>
<dbReference type="EMDB" id="EMD-40246"/>
<dbReference type="EMDB" id="EMD-45295"/>
<dbReference type="SMR" id="Q8N766"/>
<dbReference type="BioGRID" id="116700">
    <property type="interactions" value="461"/>
</dbReference>
<dbReference type="ComplexPortal" id="CPX-5848">
    <property type="entry name" value="Endoplasmic reticulum membrane complex, EMC8 variant"/>
</dbReference>
<dbReference type="ComplexPortal" id="CPX-5881">
    <property type="entry name" value="Endoplasmic reticulum membrane complex, EMC9 variant"/>
</dbReference>
<dbReference type="CORUM" id="Q8N766"/>
<dbReference type="FunCoup" id="Q8N766">
    <property type="interactions" value="2904"/>
</dbReference>
<dbReference type="IntAct" id="Q8N766">
    <property type="interactions" value="93"/>
</dbReference>
<dbReference type="MINT" id="Q8N766"/>
<dbReference type="STRING" id="9606.ENSP00000420608"/>
<dbReference type="TCDB" id="3.A.27.1.1">
    <property type="family name" value="the endoplasmic reticulum membrane protein insertion complex (emc) family"/>
</dbReference>
<dbReference type="GlyConnect" id="1223">
    <property type="glycosylation" value="6 N-Linked glycans (1 site)"/>
</dbReference>
<dbReference type="GlyCosmos" id="Q8N766">
    <property type="glycosylation" value="3 sites, 6 glycans"/>
</dbReference>
<dbReference type="GlyGen" id="Q8N766">
    <property type="glycosylation" value="4 sites, 14 N-linked glycans (2 sites), 1 O-linked glycan (1 site)"/>
</dbReference>
<dbReference type="iPTMnet" id="Q8N766"/>
<dbReference type="MetOSite" id="Q8N766"/>
<dbReference type="PhosphoSitePlus" id="Q8N766"/>
<dbReference type="SwissPalm" id="Q8N766"/>
<dbReference type="BioMuta" id="EMC1"/>
<dbReference type="DMDM" id="74751081"/>
<dbReference type="jPOST" id="Q8N766"/>
<dbReference type="MassIVE" id="Q8N766"/>
<dbReference type="PaxDb" id="9606-ENSP00000420608"/>
<dbReference type="PeptideAtlas" id="Q8N766"/>
<dbReference type="ProteomicsDB" id="72266">
    <molecule id="Q8N766-1"/>
</dbReference>
<dbReference type="ProteomicsDB" id="72267">
    <molecule id="Q8N766-2"/>
</dbReference>
<dbReference type="ProteomicsDB" id="72268">
    <molecule id="Q8N766-3"/>
</dbReference>
<dbReference type="ProteomicsDB" id="72269">
    <molecule id="Q8N766-4"/>
</dbReference>
<dbReference type="Pumba" id="Q8N766"/>
<dbReference type="TopDownProteomics" id="Q8N766-3">
    <molecule id="Q8N766-3"/>
</dbReference>
<dbReference type="Antibodypedia" id="53149">
    <property type="antibodies" value="181 antibodies from 26 providers"/>
</dbReference>
<dbReference type="DNASU" id="23065"/>
<dbReference type="Ensembl" id="ENST00000375199.7">
    <molecule id="Q8N766-2"/>
    <property type="protein sequence ID" value="ENSP00000364345.3"/>
    <property type="gene ID" value="ENSG00000127463.16"/>
</dbReference>
<dbReference type="Ensembl" id="ENST00000375208.7">
    <molecule id="Q8N766-4"/>
    <property type="protein sequence ID" value="ENSP00000364354.3"/>
    <property type="gene ID" value="ENSG00000127463.16"/>
</dbReference>
<dbReference type="Ensembl" id="ENST00000477853.6">
    <molecule id="Q8N766-1"/>
    <property type="protein sequence ID" value="ENSP00000420608.1"/>
    <property type="gene ID" value="ENSG00000127463.16"/>
</dbReference>
<dbReference type="GeneID" id="23065"/>
<dbReference type="KEGG" id="hsa:23065"/>
<dbReference type="MANE-Select" id="ENST00000477853.6">
    <property type="protein sequence ID" value="ENSP00000420608.1"/>
    <property type="RefSeq nucleotide sequence ID" value="NM_015047.3"/>
    <property type="RefSeq protein sequence ID" value="NP_055862.1"/>
</dbReference>
<dbReference type="UCSC" id="uc001bbo.5">
    <molecule id="Q8N766-1"/>
    <property type="organism name" value="human"/>
</dbReference>
<dbReference type="AGR" id="HGNC:28957"/>
<dbReference type="CTD" id="23065"/>
<dbReference type="DisGeNET" id="23065"/>
<dbReference type="GeneCards" id="EMC1"/>
<dbReference type="HGNC" id="HGNC:28957">
    <property type="gene designation" value="EMC1"/>
</dbReference>
<dbReference type="HPA" id="ENSG00000127463">
    <property type="expression patterns" value="Low tissue specificity"/>
</dbReference>
<dbReference type="MalaCards" id="EMC1"/>
<dbReference type="MIM" id="616846">
    <property type="type" value="gene"/>
</dbReference>
<dbReference type="MIM" id="616875">
    <property type="type" value="phenotype"/>
</dbReference>
<dbReference type="neXtProt" id="NX_Q8N766"/>
<dbReference type="OpenTargets" id="ENSG00000127463"/>
<dbReference type="Orphanet" id="480898">
    <property type="disease" value="Global developmental delay-visual anomalies-progressive cerebellar atrophy-truncal hypotonia syndrome"/>
</dbReference>
<dbReference type="PharmGKB" id="PA142671634"/>
<dbReference type="VEuPathDB" id="HostDB:ENSG00000127463"/>
<dbReference type="eggNOG" id="KOG2103">
    <property type="taxonomic scope" value="Eukaryota"/>
</dbReference>
<dbReference type="GeneTree" id="ENSGT00390000002461"/>
<dbReference type="HOGENOM" id="CLU_005034_2_1_1"/>
<dbReference type="InParanoid" id="Q8N766"/>
<dbReference type="OMA" id="WSIMPLN"/>
<dbReference type="OrthoDB" id="28092at2759"/>
<dbReference type="PAN-GO" id="Q8N766">
    <property type="GO annotations" value="1 GO annotation based on evolutionary models"/>
</dbReference>
<dbReference type="PhylomeDB" id="Q8N766"/>
<dbReference type="TreeFam" id="TF313012"/>
<dbReference type="PathwayCommons" id="Q8N766"/>
<dbReference type="SignaLink" id="Q8N766"/>
<dbReference type="BioGRID-ORCS" id="23065">
    <property type="hits" value="453 hits in 1168 CRISPR screens"/>
</dbReference>
<dbReference type="CD-CODE" id="FB4E32DD">
    <property type="entry name" value="Presynaptic clusters and postsynaptic densities"/>
</dbReference>
<dbReference type="ChiTaRS" id="EMC1">
    <property type="organism name" value="human"/>
</dbReference>
<dbReference type="GenomeRNAi" id="23065"/>
<dbReference type="Pharos" id="Q8N766">
    <property type="development level" value="Tbio"/>
</dbReference>
<dbReference type="PRO" id="PR:Q8N766"/>
<dbReference type="Proteomes" id="UP000005640">
    <property type="component" value="Chromosome 1"/>
</dbReference>
<dbReference type="RNAct" id="Q8N766">
    <property type="molecule type" value="protein"/>
</dbReference>
<dbReference type="Bgee" id="ENSG00000127463">
    <property type="expression patterns" value="Expressed in stromal cell of endometrium and 198 other cell types or tissues"/>
</dbReference>
<dbReference type="ExpressionAtlas" id="Q8N766">
    <property type="expression patterns" value="baseline and differential"/>
</dbReference>
<dbReference type="GO" id="GO:0072546">
    <property type="term" value="C:EMC complex"/>
    <property type="evidence" value="ECO:0000314"/>
    <property type="project" value="UniProtKB"/>
</dbReference>
<dbReference type="GO" id="GO:0005789">
    <property type="term" value="C:endoplasmic reticulum membrane"/>
    <property type="evidence" value="ECO:0000314"/>
    <property type="project" value="UniProtKB"/>
</dbReference>
<dbReference type="GO" id="GO:0016020">
    <property type="term" value="C:membrane"/>
    <property type="evidence" value="ECO:0000314"/>
    <property type="project" value="UniProtKB"/>
</dbReference>
<dbReference type="GO" id="GO:0032991">
    <property type="term" value="C:protein-containing complex"/>
    <property type="evidence" value="ECO:0000314"/>
    <property type="project" value="MGI"/>
</dbReference>
<dbReference type="GO" id="GO:0045050">
    <property type="term" value="P:protein insertion into ER membrane by stop-transfer membrane-anchor sequence"/>
    <property type="evidence" value="ECO:0000314"/>
    <property type="project" value="ComplexPortal"/>
</dbReference>
<dbReference type="GO" id="GO:0071816">
    <property type="term" value="P:tail-anchored membrane protein insertion into ER membrane"/>
    <property type="evidence" value="ECO:0000314"/>
    <property type="project" value="UniProtKB"/>
</dbReference>
<dbReference type="FunFam" id="2.130.10.10:FF:000163">
    <property type="entry name" value="ER membrane protein complex subunit 1 isoform X2"/>
    <property type="match status" value="1"/>
</dbReference>
<dbReference type="Gene3D" id="2.130.10.10">
    <property type="entry name" value="YVTN repeat-like/Quinoprotein amine dehydrogenase"/>
    <property type="match status" value="1"/>
</dbReference>
<dbReference type="InterPro" id="IPR026895">
    <property type="entry name" value="EMC1"/>
</dbReference>
<dbReference type="InterPro" id="IPR011678">
    <property type="entry name" value="EMC1_C"/>
</dbReference>
<dbReference type="InterPro" id="IPR011047">
    <property type="entry name" value="Quinoprotein_ADH-like_sf"/>
</dbReference>
<dbReference type="InterPro" id="IPR015943">
    <property type="entry name" value="WD40/YVTN_repeat-like_dom_sf"/>
</dbReference>
<dbReference type="PANTHER" id="PTHR21573">
    <property type="entry name" value="ER MEMBRANE PROTEIN COMPLEX SUBUNIT 1"/>
    <property type="match status" value="1"/>
</dbReference>
<dbReference type="PANTHER" id="PTHR21573:SF0">
    <property type="entry name" value="ER MEMBRANE PROTEIN COMPLEX SUBUNIT 1"/>
    <property type="match status" value="1"/>
</dbReference>
<dbReference type="Pfam" id="PF25293">
    <property type="entry name" value="Beta-prop_EMC1_N"/>
    <property type="match status" value="1"/>
</dbReference>
<dbReference type="Pfam" id="PF07774">
    <property type="entry name" value="EMC1_C"/>
    <property type="match status" value="1"/>
</dbReference>
<dbReference type="SUPFAM" id="SSF50998">
    <property type="entry name" value="Quinoprotein alcohol dehydrogenase-like"/>
    <property type="match status" value="1"/>
</dbReference>
<comment type="function">
    <text evidence="7 8 9 10 11 15">Part of the endoplasmic reticulum membrane protein complex (EMC) that enables the energy-independent insertion into endoplasmic reticulum membranes of newly synthesized membrane proteins (PubMed:29242231, PubMed:29809151, PubMed:30415835, PubMed:32439656, PubMed:32459176). Preferentially accommodates proteins with transmembrane domains that are weakly hydrophobic or contain destabilizing features such as charged and aromatic residues (PubMed:29242231, PubMed:29809151, PubMed:30415835). Involved in the cotranslational insertion of multi-pass membrane proteins in which stop-transfer membrane-anchor sequences become ER membrane spanning helices (PubMed:29809151, PubMed:30415835). It is also required for the post-translational insertion of tail-anchored/TA proteins in endoplasmic reticulum membranes (PubMed:29242231, PubMed:29809151). By mediating the proper cotranslational insertion of N-terminal transmembrane domains in an N-exo topology, with translocated N-terminus in the lumen of the ER, controls the topology of multi-pass membrane proteins like the G protein-coupled receptors (PubMed:30415835). By regulating the insertion of various proteins in membranes, it is indirectly involved in many cellular processes (Probable).</text>
</comment>
<comment type="subunit">
    <text evidence="4 7">Component of the ER membrane protein complex (EMC).</text>
</comment>
<comment type="interaction">
    <interactant intactId="EBI-1044442">
        <id>Q8N766</id>
    </interactant>
    <interactant intactId="EBI-25475900">
        <id>P0DTC8</id>
        <label>8</label>
    </interactant>
    <organismsDiffer>true</organismsDiffer>
    <experiments>3</experiments>
</comment>
<comment type="subcellular location">
    <subcellularLocation>
        <location evidence="4">Endoplasmic reticulum membrane</location>
        <topology evidence="10 11">Single-pass type I membrane protein</topology>
    </subcellularLocation>
</comment>
<comment type="alternative products">
    <event type="alternative splicing"/>
    <isoform>
        <id>Q8N766-1</id>
        <name>1</name>
        <sequence type="displayed"/>
    </isoform>
    <isoform>
        <id>Q8N766-2</id>
        <name>2</name>
        <sequence type="described" ref="VSP_020328"/>
    </isoform>
    <isoform>
        <id>Q8N766-3</id>
        <name>3</name>
        <sequence type="described" ref="VSP_020329"/>
    </isoform>
    <isoform>
        <id>Q8N766-4</id>
        <name>4</name>
        <sequence type="described" ref="VSP_020327"/>
    </isoform>
</comment>
<comment type="disease" evidence="6">
    <disease id="DI-04673">
        <name>Cerebellar atrophy, visual impairment, and psychomotor retardation</name>
        <acronym>CAVIPMR</acronym>
        <description>An autosomal recessive, neurodegenerative disorder characterized by developmental delay, intellectual disability, hypotonia, scoliosis, cerebellar atrophy, and variable dysmorphic features.</description>
        <dbReference type="MIM" id="616875"/>
    </disease>
    <text>The disease is caused by variants affecting the gene represented in this entry.</text>
</comment>
<comment type="similarity">
    <text evidence="15">Belongs to the EMC1 family.</text>
</comment>
<reference key="1">
    <citation type="journal article" date="2005" name="DNA Res.">
        <title>Signal sequence and keyword trap in silico for selection of full-length human cDNAs encoding secretion or membrane proteins from oligo-capped cDNA libraries.</title>
        <authorList>
            <person name="Otsuki T."/>
            <person name="Ota T."/>
            <person name="Nishikawa T."/>
            <person name="Hayashi K."/>
            <person name="Suzuki Y."/>
            <person name="Yamamoto J."/>
            <person name="Wakamatsu A."/>
            <person name="Kimura K."/>
            <person name="Sakamoto K."/>
            <person name="Hatano N."/>
            <person name="Kawai Y."/>
            <person name="Ishii S."/>
            <person name="Saito K."/>
            <person name="Kojima S."/>
            <person name="Sugiyama T."/>
            <person name="Ono T."/>
            <person name="Okano K."/>
            <person name="Yoshikawa Y."/>
            <person name="Aotsuka S."/>
            <person name="Sasaki N."/>
            <person name="Hattori A."/>
            <person name="Okumura K."/>
            <person name="Nagai K."/>
            <person name="Sugano S."/>
            <person name="Isogai T."/>
        </authorList>
    </citation>
    <scope>NUCLEOTIDE SEQUENCE [LARGE SCALE MRNA] (ISOFORM 4)</scope>
    <scope>VARIANTS THR-345 AND ASN-347</scope>
</reference>
<reference key="2">
    <citation type="journal article" date="2004" name="Nat. Genet.">
        <title>Complete sequencing and characterization of 21,243 full-length human cDNAs.</title>
        <authorList>
            <person name="Ota T."/>
            <person name="Suzuki Y."/>
            <person name="Nishikawa T."/>
            <person name="Otsuki T."/>
            <person name="Sugiyama T."/>
            <person name="Irie R."/>
            <person name="Wakamatsu A."/>
            <person name="Hayashi K."/>
            <person name="Sato H."/>
            <person name="Nagai K."/>
            <person name="Kimura K."/>
            <person name="Makita H."/>
            <person name="Sekine M."/>
            <person name="Obayashi M."/>
            <person name="Nishi T."/>
            <person name="Shibahara T."/>
            <person name="Tanaka T."/>
            <person name="Ishii S."/>
            <person name="Yamamoto J."/>
            <person name="Saito K."/>
            <person name="Kawai Y."/>
            <person name="Isono Y."/>
            <person name="Nakamura Y."/>
            <person name="Nagahari K."/>
            <person name="Murakami K."/>
            <person name="Yasuda T."/>
            <person name="Iwayanagi T."/>
            <person name="Wagatsuma M."/>
            <person name="Shiratori A."/>
            <person name="Sudo H."/>
            <person name="Hosoiri T."/>
            <person name="Kaku Y."/>
            <person name="Kodaira H."/>
            <person name="Kondo H."/>
            <person name="Sugawara M."/>
            <person name="Takahashi M."/>
            <person name="Kanda K."/>
            <person name="Yokoi T."/>
            <person name="Furuya T."/>
            <person name="Kikkawa E."/>
            <person name="Omura Y."/>
            <person name="Abe K."/>
            <person name="Kamihara K."/>
            <person name="Katsuta N."/>
            <person name="Sato K."/>
            <person name="Tanikawa M."/>
            <person name="Yamazaki M."/>
            <person name="Ninomiya K."/>
            <person name="Ishibashi T."/>
            <person name="Yamashita H."/>
            <person name="Murakawa K."/>
            <person name="Fujimori K."/>
            <person name="Tanai H."/>
            <person name="Kimata M."/>
            <person name="Watanabe M."/>
            <person name="Hiraoka S."/>
            <person name="Chiba Y."/>
            <person name="Ishida S."/>
            <person name="Ono Y."/>
            <person name="Takiguchi S."/>
            <person name="Watanabe S."/>
            <person name="Yosida M."/>
            <person name="Hotuta T."/>
            <person name="Kusano J."/>
            <person name="Kanehori K."/>
            <person name="Takahashi-Fujii A."/>
            <person name="Hara H."/>
            <person name="Tanase T.-O."/>
            <person name="Nomura Y."/>
            <person name="Togiya S."/>
            <person name="Komai F."/>
            <person name="Hara R."/>
            <person name="Takeuchi K."/>
            <person name="Arita M."/>
            <person name="Imose N."/>
            <person name="Musashino K."/>
            <person name="Yuuki H."/>
            <person name="Oshima A."/>
            <person name="Sasaki N."/>
            <person name="Aotsuka S."/>
            <person name="Yoshikawa Y."/>
            <person name="Matsunawa H."/>
            <person name="Ichihara T."/>
            <person name="Shiohata N."/>
            <person name="Sano S."/>
            <person name="Moriya S."/>
            <person name="Momiyama H."/>
            <person name="Satoh N."/>
            <person name="Takami S."/>
            <person name="Terashima Y."/>
            <person name="Suzuki O."/>
            <person name="Nakagawa S."/>
            <person name="Senoh A."/>
            <person name="Mizoguchi H."/>
            <person name="Goto Y."/>
            <person name="Shimizu F."/>
            <person name="Wakebe H."/>
            <person name="Hishigaki H."/>
            <person name="Watanabe T."/>
            <person name="Sugiyama A."/>
            <person name="Takemoto M."/>
            <person name="Kawakami B."/>
            <person name="Yamazaki M."/>
            <person name="Watanabe K."/>
            <person name="Kumagai A."/>
            <person name="Itakura S."/>
            <person name="Fukuzumi Y."/>
            <person name="Fujimori Y."/>
            <person name="Komiyama M."/>
            <person name="Tashiro H."/>
            <person name="Tanigami A."/>
            <person name="Fujiwara T."/>
            <person name="Ono T."/>
            <person name="Yamada K."/>
            <person name="Fujii Y."/>
            <person name="Ozaki K."/>
            <person name="Hirao M."/>
            <person name="Ohmori Y."/>
            <person name="Kawabata A."/>
            <person name="Hikiji T."/>
            <person name="Kobatake N."/>
            <person name="Inagaki H."/>
            <person name="Ikema Y."/>
            <person name="Okamoto S."/>
            <person name="Okitani R."/>
            <person name="Kawakami T."/>
            <person name="Noguchi S."/>
            <person name="Itoh T."/>
            <person name="Shigeta K."/>
            <person name="Senba T."/>
            <person name="Matsumura K."/>
            <person name="Nakajima Y."/>
            <person name="Mizuno T."/>
            <person name="Morinaga M."/>
            <person name="Sasaki M."/>
            <person name="Togashi T."/>
            <person name="Oyama M."/>
            <person name="Hata H."/>
            <person name="Watanabe M."/>
            <person name="Komatsu T."/>
            <person name="Mizushima-Sugano J."/>
            <person name="Satoh T."/>
            <person name="Shirai Y."/>
            <person name="Takahashi Y."/>
            <person name="Nakagawa K."/>
            <person name="Okumura K."/>
            <person name="Nagase T."/>
            <person name="Nomura N."/>
            <person name="Kikuchi H."/>
            <person name="Masuho Y."/>
            <person name="Yamashita R."/>
            <person name="Nakai K."/>
            <person name="Yada T."/>
            <person name="Nakamura Y."/>
            <person name="Ohara O."/>
            <person name="Isogai T."/>
            <person name="Sugano S."/>
        </authorList>
    </citation>
    <scope>NUCLEOTIDE SEQUENCE [LARGE SCALE MRNA] (ISOFORM 1)</scope>
    <scope>VARIANT THR-345</scope>
    <source>
        <tissue>Placenta</tissue>
    </source>
</reference>
<reference key="3">
    <citation type="journal article" date="2007" name="BMC Genomics">
        <title>The full-ORF clone resource of the German cDNA consortium.</title>
        <authorList>
            <person name="Bechtel S."/>
            <person name="Rosenfelder H."/>
            <person name="Duda A."/>
            <person name="Schmidt C.P."/>
            <person name="Ernst U."/>
            <person name="Wellenreuther R."/>
            <person name="Mehrle A."/>
            <person name="Schuster C."/>
            <person name="Bahr A."/>
            <person name="Bloecker H."/>
            <person name="Heubner D."/>
            <person name="Hoerlein A."/>
            <person name="Michel G."/>
            <person name="Wedler H."/>
            <person name="Koehrer K."/>
            <person name="Ottenwaelder B."/>
            <person name="Poustka A."/>
            <person name="Wiemann S."/>
            <person name="Schupp I."/>
        </authorList>
    </citation>
    <scope>NUCLEOTIDE SEQUENCE [LARGE SCALE MRNA] (ISOFORMS 1 AND 3)</scope>
    <source>
        <tissue>Amygdala</tissue>
        <tissue>Salivary gland</tissue>
    </source>
</reference>
<reference key="4">
    <citation type="journal article" date="2006" name="Nature">
        <title>The DNA sequence and biological annotation of human chromosome 1.</title>
        <authorList>
            <person name="Gregory S.G."/>
            <person name="Barlow K.F."/>
            <person name="McLay K.E."/>
            <person name="Kaul R."/>
            <person name="Swarbreck D."/>
            <person name="Dunham A."/>
            <person name="Scott C.E."/>
            <person name="Howe K.L."/>
            <person name="Woodfine K."/>
            <person name="Spencer C.C.A."/>
            <person name="Jones M.C."/>
            <person name="Gillson C."/>
            <person name="Searle S."/>
            <person name="Zhou Y."/>
            <person name="Kokocinski F."/>
            <person name="McDonald L."/>
            <person name="Evans R."/>
            <person name="Phillips K."/>
            <person name="Atkinson A."/>
            <person name="Cooper R."/>
            <person name="Jones C."/>
            <person name="Hall R.E."/>
            <person name="Andrews T.D."/>
            <person name="Lloyd C."/>
            <person name="Ainscough R."/>
            <person name="Almeida J.P."/>
            <person name="Ambrose K.D."/>
            <person name="Anderson F."/>
            <person name="Andrew R.W."/>
            <person name="Ashwell R.I.S."/>
            <person name="Aubin K."/>
            <person name="Babbage A.K."/>
            <person name="Bagguley C.L."/>
            <person name="Bailey J."/>
            <person name="Beasley H."/>
            <person name="Bethel G."/>
            <person name="Bird C.P."/>
            <person name="Bray-Allen S."/>
            <person name="Brown J.Y."/>
            <person name="Brown A.J."/>
            <person name="Buckley D."/>
            <person name="Burton J."/>
            <person name="Bye J."/>
            <person name="Carder C."/>
            <person name="Chapman J.C."/>
            <person name="Clark S.Y."/>
            <person name="Clarke G."/>
            <person name="Clee C."/>
            <person name="Cobley V."/>
            <person name="Collier R.E."/>
            <person name="Corby N."/>
            <person name="Coville G.J."/>
            <person name="Davies J."/>
            <person name="Deadman R."/>
            <person name="Dunn M."/>
            <person name="Earthrowl M."/>
            <person name="Ellington A.G."/>
            <person name="Errington H."/>
            <person name="Frankish A."/>
            <person name="Frankland J."/>
            <person name="French L."/>
            <person name="Garner P."/>
            <person name="Garnett J."/>
            <person name="Gay L."/>
            <person name="Ghori M.R.J."/>
            <person name="Gibson R."/>
            <person name="Gilby L.M."/>
            <person name="Gillett W."/>
            <person name="Glithero R.J."/>
            <person name="Grafham D.V."/>
            <person name="Griffiths C."/>
            <person name="Griffiths-Jones S."/>
            <person name="Grocock R."/>
            <person name="Hammond S."/>
            <person name="Harrison E.S.I."/>
            <person name="Hart E."/>
            <person name="Haugen E."/>
            <person name="Heath P.D."/>
            <person name="Holmes S."/>
            <person name="Holt K."/>
            <person name="Howden P.J."/>
            <person name="Hunt A.R."/>
            <person name="Hunt S.E."/>
            <person name="Hunter G."/>
            <person name="Isherwood J."/>
            <person name="James R."/>
            <person name="Johnson C."/>
            <person name="Johnson D."/>
            <person name="Joy A."/>
            <person name="Kay M."/>
            <person name="Kershaw J.K."/>
            <person name="Kibukawa M."/>
            <person name="Kimberley A.M."/>
            <person name="King A."/>
            <person name="Knights A.J."/>
            <person name="Lad H."/>
            <person name="Laird G."/>
            <person name="Lawlor S."/>
            <person name="Leongamornlert D.A."/>
            <person name="Lloyd D.M."/>
            <person name="Loveland J."/>
            <person name="Lovell J."/>
            <person name="Lush M.J."/>
            <person name="Lyne R."/>
            <person name="Martin S."/>
            <person name="Mashreghi-Mohammadi M."/>
            <person name="Matthews L."/>
            <person name="Matthews N.S.W."/>
            <person name="McLaren S."/>
            <person name="Milne S."/>
            <person name="Mistry S."/>
            <person name="Moore M.J.F."/>
            <person name="Nickerson T."/>
            <person name="O'Dell C.N."/>
            <person name="Oliver K."/>
            <person name="Palmeiri A."/>
            <person name="Palmer S.A."/>
            <person name="Parker A."/>
            <person name="Patel D."/>
            <person name="Pearce A.V."/>
            <person name="Peck A.I."/>
            <person name="Pelan S."/>
            <person name="Phelps K."/>
            <person name="Phillimore B.J."/>
            <person name="Plumb R."/>
            <person name="Rajan J."/>
            <person name="Raymond C."/>
            <person name="Rouse G."/>
            <person name="Saenphimmachak C."/>
            <person name="Sehra H.K."/>
            <person name="Sheridan E."/>
            <person name="Shownkeen R."/>
            <person name="Sims S."/>
            <person name="Skuce C.D."/>
            <person name="Smith M."/>
            <person name="Steward C."/>
            <person name="Subramanian S."/>
            <person name="Sycamore N."/>
            <person name="Tracey A."/>
            <person name="Tromans A."/>
            <person name="Van Helmond Z."/>
            <person name="Wall M."/>
            <person name="Wallis J.M."/>
            <person name="White S."/>
            <person name="Whitehead S.L."/>
            <person name="Wilkinson J.E."/>
            <person name="Willey D.L."/>
            <person name="Williams H."/>
            <person name="Wilming L."/>
            <person name="Wray P.W."/>
            <person name="Wu Z."/>
            <person name="Coulson A."/>
            <person name="Vaudin M."/>
            <person name="Sulston J.E."/>
            <person name="Durbin R.M."/>
            <person name="Hubbard T."/>
            <person name="Wooster R."/>
            <person name="Dunham I."/>
            <person name="Carter N.P."/>
            <person name="McVean G."/>
            <person name="Ross M.T."/>
            <person name="Harrow J."/>
            <person name="Olson M.V."/>
            <person name="Beck S."/>
            <person name="Rogers J."/>
            <person name="Bentley D.R."/>
        </authorList>
    </citation>
    <scope>NUCLEOTIDE SEQUENCE [LARGE SCALE GENOMIC DNA]</scope>
</reference>
<reference key="5">
    <citation type="submission" date="2005-07" db="EMBL/GenBank/DDBJ databases">
        <authorList>
            <person name="Mural R.J."/>
            <person name="Istrail S."/>
            <person name="Sutton G.G."/>
            <person name="Florea L."/>
            <person name="Halpern A.L."/>
            <person name="Mobarry C.M."/>
            <person name="Lippert R."/>
            <person name="Walenz B."/>
            <person name="Shatkay H."/>
            <person name="Dew I."/>
            <person name="Miller J.R."/>
            <person name="Flanigan M.J."/>
            <person name="Edwards N.J."/>
            <person name="Bolanos R."/>
            <person name="Fasulo D."/>
            <person name="Halldorsson B.V."/>
            <person name="Hannenhalli S."/>
            <person name="Turner R."/>
            <person name="Yooseph S."/>
            <person name="Lu F."/>
            <person name="Nusskern D.R."/>
            <person name="Shue B.C."/>
            <person name="Zheng X.H."/>
            <person name="Zhong F."/>
            <person name="Delcher A.L."/>
            <person name="Huson D.H."/>
            <person name="Kravitz S.A."/>
            <person name="Mouchard L."/>
            <person name="Reinert K."/>
            <person name="Remington K.A."/>
            <person name="Clark A.G."/>
            <person name="Waterman M.S."/>
            <person name="Eichler E.E."/>
            <person name="Adams M.D."/>
            <person name="Hunkapiller M.W."/>
            <person name="Myers E.W."/>
            <person name="Venter J.C."/>
        </authorList>
    </citation>
    <scope>NUCLEOTIDE SEQUENCE [LARGE SCALE GENOMIC DNA]</scope>
</reference>
<reference key="6">
    <citation type="journal article" date="2004" name="Genome Res.">
        <title>The status, quality, and expansion of the NIH full-length cDNA project: the Mammalian Gene Collection (MGC).</title>
        <authorList>
            <consortium name="The MGC Project Team"/>
        </authorList>
    </citation>
    <scope>NUCLEOTIDE SEQUENCE [LARGE SCALE MRNA] (ISOFORM 1)</scope>
    <source>
        <tissue>Testis</tissue>
    </source>
</reference>
<reference key="7">
    <citation type="journal article" date="1995" name="DNA Res.">
        <title>Prediction of the coding sequences of unidentified human genes. III. The coding sequences of 40 new genes (KIAA0081-KIAA0120) deduced by analysis of cDNA clones from human cell line KG-1.</title>
        <authorList>
            <person name="Nagase T."/>
            <person name="Miyajima N."/>
            <person name="Tanaka A."/>
            <person name="Sazuka T."/>
            <person name="Seki N."/>
            <person name="Sato S."/>
            <person name="Tabata S."/>
            <person name="Ishikawa K."/>
            <person name="Kawarabayasi Y."/>
            <person name="Kotani H."/>
            <person name="Nomura N."/>
        </authorList>
    </citation>
    <scope>NUCLEOTIDE SEQUENCE [LARGE SCALE MRNA] OF 2-993 (ISOFORM 2)</scope>
    <source>
        <tissue>Bone marrow</tissue>
    </source>
</reference>
<reference key="8">
    <citation type="submission" date="2006-03" db="EMBL/GenBank/DDBJ databases">
        <authorList>
            <person name="Ohara O."/>
            <person name="Nagase T."/>
            <person name="Kikuno R."/>
            <person name="Nomura N."/>
        </authorList>
    </citation>
    <scope>SEQUENCE REVISION</scope>
</reference>
<reference key="9">
    <citation type="journal article" date="2009" name="J. Proteome Res.">
        <title>Glycoproteomics analysis of human liver tissue by combination of multiple enzyme digestion and hydrazide chemistry.</title>
        <authorList>
            <person name="Chen R."/>
            <person name="Jiang X."/>
            <person name="Sun D."/>
            <person name="Han G."/>
            <person name="Wang F."/>
            <person name="Ye M."/>
            <person name="Wang L."/>
            <person name="Zou H."/>
        </authorList>
    </citation>
    <scope>GLYCOSYLATION [LARGE SCALE ANALYSIS] AT ASN-913</scope>
    <source>
        <tissue>Liver</tissue>
    </source>
</reference>
<reference key="10">
    <citation type="journal article" date="2009" name="Sci. Signal.">
        <title>Quantitative phosphoproteomic analysis of T cell receptor signaling reveals system-wide modulation of protein-protein interactions.</title>
        <authorList>
            <person name="Mayya V."/>
            <person name="Lundgren D.H."/>
            <person name="Hwang S.-I."/>
            <person name="Rezaul K."/>
            <person name="Wu L."/>
            <person name="Eng J.K."/>
            <person name="Rodionov V."/>
            <person name="Han D.K."/>
        </authorList>
    </citation>
    <scope>IDENTIFICATION BY MASS SPECTROMETRY [LARGE SCALE ANALYSIS]</scope>
    <source>
        <tissue>Leukemic T-cell</tissue>
    </source>
</reference>
<reference key="11">
    <citation type="journal article" date="2011" name="BMC Syst. Biol.">
        <title>Initial characterization of the human central proteome.</title>
        <authorList>
            <person name="Burkard T.R."/>
            <person name="Planyavsky M."/>
            <person name="Kaupe I."/>
            <person name="Breitwieser F.P."/>
            <person name="Buerckstuemmer T."/>
            <person name="Bennett K.L."/>
            <person name="Superti-Furga G."/>
            <person name="Colinge J."/>
        </authorList>
    </citation>
    <scope>IDENTIFICATION BY MASS SPECTROMETRY [LARGE SCALE ANALYSIS]</scope>
</reference>
<reference key="12">
    <citation type="journal article" date="2012" name="Nat. Cell Biol.">
        <title>Defining human ERAD networks through an integrative mapping strategy.</title>
        <authorList>
            <person name="Christianson J.C."/>
            <person name="Olzmann J.A."/>
            <person name="Shaler T.A."/>
            <person name="Sowa M.E."/>
            <person name="Bennett E.J."/>
            <person name="Richter C.M."/>
            <person name="Tyler R.E."/>
            <person name="Greenblatt E.J."/>
            <person name="Harper J.W."/>
            <person name="Kopito R.R."/>
        </authorList>
    </citation>
    <scope>IDENTIFICATION IN THE EMC COMPLEX</scope>
    <scope>SUBCELLULAR LOCATION</scope>
</reference>
<reference key="13">
    <citation type="journal article" date="2015" name="Proteomics">
        <title>N-terminome analysis of the human mitochondrial proteome.</title>
        <authorList>
            <person name="Vaca Jacome A.S."/>
            <person name="Rabilloud T."/>
            <person name="Schaeffer-Reiss C."/>
            <person name="Rompais M."/>
            <person name="Ayoub D."/>
            <person name="Lane L."/>
            <person name="Bairoch A."/>
            <person name="Van Dorsselaer A."/>
            <person name="Carapito C."/>
        </authorList>
    </citation>
    <scope>IDENTIFICATION BY MASS SPECTROMETRY [LARGE SCALE ANALYSIS]</scope>
</reference>
<reference key="14">
    <citation type="journal article" date="2018" name="Cell">
        <title>EMC Is Required to Initiate Accurate Membrane Protein Topogenesis.</title>
        <authorList>
            <person name="Chitwood P.J."/>
            <person name="Juszkiewicz S."/>
            <person name="Guna A."/>
            <person name="Shao S."/>
            <person name="Hegde R.S."/>
        </authorList>
    </citation>
    <scope>FUNCTION</scope>
</reference>
<reference key="15">
    <citation type="journal article" date="2018" name="Elife">
        <title>The ER membrane protein complex interacts cotranslationally to enable biogenesis of multipass membrane proteins.</title>
        <authorList>
            <person name="Shurtleff M.J."/>
            <person name="Itzhak D.N."/>
            <person name="Hussmann J.A."/>
            <person name="Schirle Oakdale N.T."/>
            <person name="Costa E.A."/>
            <person name="Jonikas M."/>
            <person name="Weibezahn J."/>
            <person name="Popova K.D."/>
            <person name="Jan C.H."/>
            <person name="Sinitcyn P."/>
            <person name="Vembar S.S."/>
            <person name="Hernandez H."/>
            <person name="Cox J."/>
            <person name="Burlingame A.L."/>
            <person name="Brodsky J.L."/>
            <person name="Frost A."/>
            <person name="Borner G.H."/>
            <person name="Weissman J.S."/>
        </authorList>
    </citation>
    <scope>FUNCTION</scope>
</reference>
<reference key="16">
    <citation type="journal article" date="2018" name="Science">
        <title>The ER membrane protein complex is a transmembrane domain insertase.</title>
        <authorList>
            <person name="Guna A."/>
            <person name="Volkmar N."/>
            <person name="Christianson J.C."/>
            <person name="Hegde R.S."/>
        </authorList>
    </citation>
    <scope>FUNCTION</scope>
    <scope>SUBUNIT</scope>
</reference>
<reference evidence="17" key="17">
    <citation type="journal article" date="2020" name="Elife">
        <title>The architecture of EMC reveals a path for membrane protein insertion.</title>
        <authorList>
            <person name="O'Donnell J.P."/>
            <person name="Phillips B.P."/>
            <person name="Yagita Y."/>
            <person name="Juszkiewicz S."/>
            <person name="Wagner A."/>
            <person name="Malinverni D."/>
            <person name="Keenan R.J."/>
            <person name="Miller E.A."/>
            <person name="Hegde R.S."/>
        </authorList>
    </citation>
    <scope>STRUCTURE BY ELECTRON MICROSCOPY (6.40 ANGSTROMS) OF THE EMC COMPLEX</scope>
    <scope>TOPOLOGY</scope>
</reference>
<reference evidence="16" key="18">
    <citation type="journal article" date="2020" name="Science">
        <title>Structural basis for membrane insertion by the human ER membrane protein complex.</title>
        <authorList>
            <person name="Pleiner T."/>
            <person name="Tomaleri G.P."/>
            <person name="Januszyk K."/>
            <person name="Inglis A.J."/>
            <person name="Hazu M."/>
            <person name="Voorhees R.M."/>
        </authorList>
    </citation>
    <scope>STRUCTURE BY ELECTRON MICROSCOPY (3.40 ANGSTROMS) OF THE EMC COMPLEX</scope>
    <scope>SUBUNIT</scope>
    <scope>TOPOLOGY</scope>
    <scope>SIGNAL PEPTIDE</scope>
    <scope>DISULFIDE BOND</scope>
    <scope>GLYCOSYLATION AT ASN-370; ASN-818 AND ASN-913</scope>
</reference>
<reference key="19">
    <citation type="journal article" date="2016" name="Am. J. Hum. Genet.">
        <title>Monoallelic and biallelic variants in EMC1 identified in individuals with global developmental delay, hypotonia, scoliosis, and cerebellar atrophy.</title>
        <authorList>
            <consortium name="Baylor-Hopkins Center for Mendelian Genomics"/>
            <person name="Harel T."/>
            <person name="Yesil G."/>
            <person name="Bayram Y."/>
            <person name="Coban-Akdemir Z."/>
            <person name="Charng W.L."/>
            <person name="Karaca E."/>
            <person name="Al Asmari A."/>
            <person name="Eldomery M.K."/>
            <person name="Hunter J.V."/>
            <person name="Jhangiani S.N."/>
            <person name="Rosenfeld J.A."/>
            <person name="Pehlivan D."/>
            <person name="El-Hattab A.W."/>
            <person name="Saleh M.A."/>
            <person name="LeDuc C.A."/>
            <person name="Muzny D."/>
            <person name="Boerwinkle E."/>
            <person name="Gibbs R.A."/>
            <person name="Chung W.K."/>
            <person name="Yang Y."/>
            <person name="Belmont J.W."/>
            <person name="Lupski J.R."/>
        </authorList>
    </citation>
    <scope>INVOLVEMENT IN CAVIPMR</scope>
    <scope>VARIANTS CAVIPMR MET-82; ARG-471 AND ARG-868</scope>
</reference>
<reference key="20">
    <citation type="journal article" date="2013" name="Genome Res.">
        <title>Autozygome-guided exome sequencing in retinal dystrophy patients reveals pathogenetic mutations and novel candidate disease genes.</title>
        <authorList>
            <person name="Abu-Safieh L."/>
            <person name="Alrashed M."/>
            <person name="Anazi S."/>
            <person name="Alkuraya H."/>
            <person name="Khan A.O."/>
            <person name="Al-Owain M."/>
            <person name="Al-Zahrani J."/>
            <person name="Al-Abdi L."/>
            <person name="Hashem M."/>
            <person name="Al-Tarimi S."/>
            <person name="Sebai M.A."/>
            <person name="Shamia A."/>
            <person name="Ray-Zack M.D."/>
            <person name="Nassan M."/>
            <person name="Al-Hassnan Z.N."/>
            <person name="Rahbeeni Z."/>
            <person name="Waheeb S."/>
            <person name="Alkharashi A."/>
            <person name="Abboud E."/>
            <person name="Al-Hazzaa S.A."/>
            <person name="Alkuraya F.S."/>
        </authorList>
    </citation>
    <scope>VARIANT THR-144</scope>
</reference>
<sequence>MAAEWASRFWLWATLLIPAAAVYEDQVGKFDWRQQYVGKVKFASLEFSPGSKKLVVATEKNVIAALNSRTGEILWRHVDKGTAEGAVDAMLLHGQDVITVSNGGRIMRSWETNIGGLNWEITLDSGSFQALGLVGLQESVRYIAVLKKTTLALHHLSSGHLKWVEHLPESDSIHYQMVYSYGSGVVWALGVVPFSHVNIVKFNVEDGEIVQQVRVSTPWLQHLSGACGVVDEAVLVCPDPSSRSLQTLALETEWELRQIPLQSLDLEFGSGFQPRVLPTQPNPVDASRAQFFLHLSPSHYALLQYHYGTLSLLKNFPQTALVSFATTGEKTVAAVMACRNEVQKSSSSEDGSMGSFSEKSSSKDSLACFNQTYTINLYLVETGRRLLDTTITFSLEQSGTRPERLYIQVFLKKDDSVGYRALVQTEDHLLLFLQQLAGKVVLWSREESLAEVVCLEMVDLPLTGAQAELEGEFGKKADGLLGMFLKRLSSQLILLQAWTSHLWKMFYDARKPRSQIKNEINIDTLARDEFNLQKMMVMVTASGKLFGIESSSGTILWKQYLPNVKPDSSFKLMVQRTTAHFPHPPQCTLLVKDKESGMSSLYVFNPIFGKWSQVAPPVLKRPILQSLLLPVMDQDYAKVLLLIDDEYKVTAFPATRNVLRQLHELAPSIFFYLVDAEQGRLCGYRLRKDLTTELSWELTIPPEVQRIVKVKGKRSSEHVHSQGRVMGDRSVLYKSLNPNLLAVVTESTDAHHERTFIGIFLIDGVTGRIIHSSVQKKAKGPVHIVHSENWVVYQYWNTKARRNEFTVLELYEGTEQYNATAFSSLDRPQLPQVLQQSYIFPSSISAMEATITERGITSRHLLIGLPSGAILSLPKALLDPRRPEIPTEQSREENLIPYSPDVQIHAERFINYNQTVSRMRGIYTAPSGLESTCLVVAYGLDIYQTRVYPSKQFDVLKDDYDYVLISSVLFGLVFATMITKRLAQVKLLNRAWR</sequence>
<organism>
    <name type="scientific">Homo sapiens</name>
    <name type="common">Human</name>
    <dbReference type="NCBI Taxonomy" id="9606"/>
    <lineage>
        <taxon>Eukaryota</taxon>
        <taxon>Metazoa</taxon>
        <taxon>Chordata</taxon>
        <taxon>Craniata</taxon>
        <taxon>Vertebrata</taxon>
        <taxon>Euteleostomi</taxon>
        <taxon>Mammalia</taxon>
        <taxon>Eutheria</taxon>
        <taxon>Euarchontoglires</taxon>
        <taxon>Primates</taxon>
        <taxon>Haplorrhini</taxon>
        <taxon>Catarrhini</taxon>
        <taxon>Hominidae</taxon>
        <taxon>Homo</taxon>
    </lineage>
</organism>
<proteinExistence type="evidence at protein level"/>
<name>EMC1_HUMAN</name>
<keyword id="KW-0002">3D-structure</keyword>
<keyword id="KW-0025">Alternative splicing</keyword>
<keyword id="KW-0225">Disease variant</keyword>
<keyword id="KW-1015">Disulfide bond</keyword>
<keyword id="KW-0256">Endoplasmic reticulum</keyword>
<keyword id="KW-0325">Glycoprotein</keyword>
<keyword id="KW-0472">Membrane</keyword>
<keyword id="KW-0523">Neurodegeneration</keyword>
<keyword id="KW-1267">Proteomics identification</keyword>
<keyword id="KW-1185">Reference proteome</keyword>
<keyword id="KW-0732">Signal</keyword>
<keyword id="KW-0812">Transmembrane</keyword>
<keyword id="KW-1133">Transmembrane helix</keyword>
<feature type="signal peptide" evidence="10">
    <location>
        <begin position="1"/>
        <end position="22"/>
    </location>
</feature>
<feature type="chain" id="PRO_0000248597" description="ER membrane protein complex subunit 1">
    <location>
        <begin position="23"/>
        <end position="993"/>
    </location>
</feature>
<feature type="topological domain" description="Lumenal" evidence="10">
    <location>
        <begin position="23"/>
        <end position="962"/>
    </location>
</feature>
<feature type="transmembrane region" description="Helical" evidence="10">
    <location>
        <begin position="963"/>
        <end position="983"/>
    </location>
</feature>
<feature type="topological domain" description="Cytoplasmic" evidence="10">
    <location>
        <begin position="984"/>
        <end position="993"/>
    </location>
</feature>
<feature type="glycosylation site" description="N-linked (GlcNAc...) asparagine" evidence="10 16">
    <location>
        <position position="370"/>
    </location>
</feature>
<feature type="glycosylation site" description="N-linked (GlcNAc...) asparagine" evidence="10 16">
    <location>
        <position position="818"/>
    </location>
</feature>
<feature type="glycosylation site" description="N-linked (GlcNAc...) asparagine" evidence="3 10 16">
    <location>
        <position position="913"/>
    </location>
</feature>
<feature type="disulfide bond" evidence="10 16">
    <location>
        <begin position="227"/>
        <end position="237"/>
    </location>
</feature>
<feature type="disulfide bond" evidence="10 16">
    <location>
        <begin position="338"/>
        <end position="368"/>
    </location>
</feature>
<feature type="splice variant" id="VSP_020327" description="In isoform 4." evidence="12">
    <original>LWRHVDKGTAEGAVDAMLLHGQD</original>
    <variation>Y</variation>
    <location>
        <begin position="74"/>
        <end position="96"/>
    </location>
</feature>
<feature type="splice variant" id="VSP_020328" description="In isoform 2." evidence="14">
    <location>
        <position position="343"/>
    </location>
</feature>
<feature type="splice variant" id="VSP_020329" description="In isoform 3." evidence="13">
    <location>
        <position position="437"/>
    </location>
</feature>
<feature type="sequence variant" id="VAR_076915" description="In CAVIPMR; dbSNP:rs869320625." evidence="6">
    <original>T</original>
    <variation>M</variation>
    <location>
        <position position="82"/>
    </location>
</feature>
<feature type="sequence variant" id="VAR_076916" description="Found in patients with retinitis pigmentosa; uncertain significance; dbSNP:rs869320623." evidence="5">
    <original>A</original>
    <variation>T</variation>
    <location>
        <position position="144"/>
    </location>
</feature>
<feature type="sequence variant" id="VAR_027359" description="In dbSNP:rs3850531.">
    <original>L</original>
    <variation>S</variation>
    <location>
        <position position="295"/>
    </location>
</feature>
<feature type="sequence variant" id="VAR_027360" description="In dbSNP:rs709683." evidence="1 2">
    <original>S</original>
    <variation>T</variation>
    <location>
        <position position="345"/>
    </location>
</feature>
<feature type="sequence variant" id="VAR_027361" description="In dbSNP:rs709682." evidence="2">
    <original>S</original>
    <variation>N</variation>
    <location>
        <position position="347"/>
    </location>
</feature>
<feature type="sequence variant" id="VAR_076917" description="In CAVIPMR; uncertain significance; dbSNP:rs879253819." evidence="6">
    <original>G</original>
    <variation>R</variation>
    <location>
        <position position="471"/>
    </location>
</feature>
<feature type="sequence variant" id="VAR_076918" description="In CAVIPMR; dbSNP:rs869320626." evidence="6">
    <original>G</original>
    <variation>R</variation>
    <location>
        <position position="868"/>
    </location>
</feature>
<feature type="sequence conflict" description="In Ref. 2; CAH56140." evidence="15" ref="2">
    <original>F</original>
    <variation>L</variation>
    <location>
        <position position="9"/>
    </location>
</feature>
<feature type="sequence conflict" description="In Ref. 2; CAH56165." evidence="15" ref="2">
    <original>P</original>
    <variation>L</variation>
    <location>
        <position position="240"/>
    </location>
</feature>
<feature type="sequence conflict" description="In Ref. 2; CAH56165." evidence="15" ref="2">
    <original>L</original>
    <variation>P</variation>
    <location>
        <position position="469"/>
    </location>
</feature>
<feature type="sequence conflict" description="In Ref. 1; BAC11702." evidence="15" ref="1">
    <original>F</original>
    <variation>Y</variation>
    <location>
        <position position="570"/>
    </location>
</feature>
<feature type="sequence conflict" description="In Ref. 1; BAC11702." evidence="15" ref="1">
    <original>R</original>
    <variation>H</variation>
    <location>
        <position position="724"/>
    </location>
</feature>
<feature type="sequence conflict" description="In Ref. 1; BAC11702." evidence="15" ref="1">
    <original>S</original>
    <variation>F</variation>
    <location>
        <position position="824"/>
    </location>
</feature>
<feature type="sequence conflict" description="In Ref. 2; CAH56165." evidence="15" ref="2">
    <original>LA</original>
    <variation>PV</variation>
    <location>
        <begin position="982"/>
        <end position="983"/>
    </location>
</feature>
<feature type="turn" evidence="21">
    <location>
        <begin position="23"/>
        <end position="25"/>
    </location>
</feature>
<feature type="strand" evidence="21">
    <location>
        <begin position="26"/>
        <end position="30"/>
    </location>
</feature>
<feature type="strand" evidence="21">
    <location>
        <begin position="32"/>
        <end position="35"/>
    </location>
</feature>
<feature type="strand" evidence="21">
    <location>
        <begin position="40"/>
        <end position="43"/>
    </location>
</feature>
<feature type="strand" evidence="21">
    <location>
        <begin position="51"/>
        <end position="58"/>
    </location>
</feature>
<feature type="strand" evidence="21">
    <location>
        <begin position="61"/>
        <end position="70"/>
    </location>
</feature>
<feature type="strand" evidence="18">
    <location>
        <begin position="73"/>
        <end position="78"/>
    </location>
</feature>
<feature type="strand" evidence="21">
    <location>
        <begin position="82"/>
        <end position="84"/>
    </location>
</feature>
<feature type="strand" evidence="21">
    <location>
        <begin position="89"/>
        <end position="92"/>
    </location>
</feature>
<feature type="strand" evidence="21">
    <location>
        <begin position="94"/>
        <end position="100"/>
    </location>
</feature>
<feature type="turn" evidence="21">
    <location>
        <begin position="102"/>
        <end position="104"/>
    </location>
</feature>
<feature type="strand" evidence="21">
    <location>
        <begin position="105"/>
        <end position="114"/>
    </location>
</feature>
<feature type="strand" evidence="21">
    <location>
        <begin position="116"/>
        <end position="122"/>
    </location>
</feature>
<feature type="strand" evidence="21">
    <location>
        <begin position="130"/>
        <end position="146"/>
    </location>
</feature>
<feature type="strand" evidence="21">
    <location>
        <begin position="148"/>
        <end position="158"/>
    </location>
</feature>
<feature type="strand" evidence="21">
    <location>
        <begin position="161"/>
        <end position="166"/>
    </location>
</feature>
<feature type="strand" evidence="19">
    <location>
        <begin position="171"/>
        <end position="173"/>
    </location>
</feature>
<feature type="strand" evidence="19">
    <location>
        <begin position="175"/>
        <end position="179"/>
    </location>
</feature>
<feature type="strand" evidence="21">
    <location>
        <begin position="184"/>
        <end position="191"/>
    </location>
</feature>
<feature type="strand" evidence="21">
    <location>
        <begin position="193"/>
        <end position="206"/>
    </location>
</feature>
<feature type="strand" evidence="21">
    <location>
        <begin position="209"/>
        <end position="216"/>
    </location>
</feature>
<feature type="strand" evidence="21">
    <location>
        <begin position="224"/>
        <end position="226"/>
    </location>
</feature>
<feature type="strand" evidence="21">
    <location>
        <begin position="228"/>
        <end position="230"/>
    </location>
</feature>
<feature type="turn" evidence="21">
    <location>
        <begin position="231"/>
        <end position="233"/>
    </location>
</feature>
<feature type="strand" evidence="21">
    <location>
        <begin position="234"/>
        <end position="239"/>
    </location>
</feature>
<feature type="turn" evidence="21">
    <location>
        <begin position="240"/>
        <end position="243"/>
    </location>
</feature>
<feature type="strand" evidence="21">
    <location>
        <begin position="244"/>
        <end position="255"/>
    </location>
</feature>
<feature type="strand" evidence="21">
    <location>
        <begin position="257"/>
        <end position="260"/>
    </location>
</feature>
<feature type="turn" evidence="18">
    <location>
        <begin position="262"/>
        <end position="265"/>
    </location>
</feature>
<feature type="strand" evidence="21">
    <location>
        <begin position="275"/>
        <end position="277"/>
    </location>
</feature>
<feature type="strand" evidence="21">
    <location>
        <begin position="282"/>
        <end position="286"/>
    </location>
</feature>
<feature type="strand" evidence="21">
    <location>
        <begin position="289"/>
        <end position="294"/>
    </location>
</feature>
<feature type="strand" evidence="21">
    <location>
        <begin position="296"/>
        <end position="298"/>
    </location>
</feature>
<feature type="strand" evidence="21">
    <location>
        <begin position="302"/>
        <end position="308"/>
    </location>
</feature>
<feature type="strand" evidence="21">
    <location>
        <begin position="310"/>
        <end position="313"/>
    </location>
</feature>
<feature type="strand" evidence="21">
    <location>
        <begin position="321"/>
        <end position="329"/>
    </location>
</feature>
<feature type="strand" evidence="21">
    <location>
        <begin position="331"/>
        <end position="337"/>
    </location>
</feature>
<feature type="strand" evidence="21">
    <location>
        <begin position="356"/>
        <end position="358"/>
    </location>
</feature>
<feature type="strand" evidence="21">
    <location>
        <begin position="363"/>
        <end position="365"/>
    </location>
</feature>
<feature type="strand" evidence="21">
    <location>
        <begin position="367"/>
        <end position="369"/>
    </location>
</feature>
<feature type="strand" evidence="21">
    <location>
        <begin position="372"/>
        <end position="382"/>
    </location>
</feature>
<feature type="strand" evidence="21">
    <location>
        <begin position="385"/>
        <end position="394"/>
    </location>
</feature>
<feature type="strand" evidence="21">
    <location>
        <begin position="396"/>
        <end position="399"/>
    </location>
</feature>
<feature type="strand" evidence="21">
    <location>
        <begin position="405"/>
        <end position="412"/>
    </location>
</feature>
<feature type="turn" evidence="21">
    <location>
        <begin position="413"/>
        <end position="415"/>
    </location>
</feature>
<feature type="strand" evidence="21">
    <location>
        <begin position="416"/>
        <end position="424"/>
    </location>
</feature>
<feature type="strand" evidence="21">
    <location>
        <begin position="426"/>
        <end position="428"/>
    </location>
</feature>
<feature type="strand" evidence="21">
    <location>
        <begin position="430"/>
        <end position="433"/>
    </location>
</feature>
<feature type="strand" evidence="21">
    <location>
        <begin position="435"/>
        <end position="438"/>
    </location>
</feature>
<feature type="strand" evidence="21">
    <location>
        <begin position="440"/>
        <end position="445"/>
    </location>
</feature>
<feature type="strand" evidence="21">
    <location>
        <begin position="449"/>
        <end position="458"/>
    </location>
</feature>
<feature type="helix" evidence="21">
    <location>
        <begin position="464"/>
        <end position="473"/>
    </location>
</feature>
<feature type="helix" evidence="21">
    <location>
        <begin position="480"/>
        <end position="509"/>
    </location>
</feature>
<feature type="helix" evidence="21">
    <location>
        <begin position="521"/>
        <end position="524"/>
    </location>
</feature>
<feature type="strand" evidence="21">
    <location>
        <begin position="535"/>
        <end position="552"/>
    </location>
</feature>
<feature type="strand" evidence="21">
    <location>
        <begin position="555"/>
        <end position="560"/>
    </location>
</feature>
<feature type="strand" evidence="21">
    <location>
        <begin position="569"/>
        <end position="576"/>
    </location>
</feature>
<feature type="strand" evidence="21">
    <location>
        <begin position="581"/>
        <end position="583"/>
    </location>
</feature>
<feature type="strand" evidence="21">
    <location>
        <begin position="586"/>
        <end position="592"/>
    </location>
</feature>
<feature type="strand" evidence="21">
    <location>
        <begin position="594"/>
        <end position="596"/>
    </location>
</feature>
<feature type="strand" evidence="21">
    <location>
        <begin position="599"/>
        <end position="604"/>
    </location>
</feature>
<feature type="strand" evidence="21">
    <location>
        <begin position="606"/>
        <end position="608"/>
    </location>
</feature>
<feature type="strand" evidence="21">
    <location>
        <begin position="625"/>
        <end position="633"/>
    </location>
</feature>
<feature type="turn" evidence="21">
    <location>
        <begin position="634"/>
        <end position="636"/>
    </location>
</feature>
<feature type="strand" evidence="21">
    <location>
        <begin position="637"/>
        <end position="643"/>
    </location>
</feature>
<feature type="strand" evidence="21">
    <location>
        <begin position="649"/>
        <end position="653"/>
    </location>
</feature>
<feature type="helix" evidence="21">
    <location>
        <begin position="656"/>
        <end position="665"/>
    </location>
</feature>
<feature type="helix" evidence="19">
    <location>
        <begin position="666"/>
        <end position="668"/>
    </location>
</feature>
<feature type="strand" evidence="21">
    <location>
        <begin position="670"/>
        <end position="673"/>
    </location>
</feature>
<feature type="strand" evidence="21">
    <location>
        <begin position="676"/>
        <end position="678"/>
    </location>
</feature>
<feature type="strand" evidence="21">
    <location>
        <begin position="680"/>
        <end position="685"/>
    </location>
</feature>
<feature type="strand" evidence="21">
    <location>
        <begin position="688"/>
        <end position="690"/>
    </location>
</feature>
<feature type="strand" evidence="21">
    <location>
        <begin position="694"/>
        <end position="699"/>
    </location>
</feature>
<feature type="turn" evidence="21">
    <location>
        <begin position="702"/>
        <end position="704"/>
    </location>
</feature>
<feature type="strand" evidence="21">
    <location>
        <begin position="705"/>
        <end position="711"/>
    </location>
</feature>
<feature type="strand" evidence="21">
    <location>
        <begin position="723"/>
        <end position="725"/>
    </location>
</feature>
<feature type="strand" evidence="21">
    <location>
        <begin position="727"/>
        <end position="729"/>
    </location>
</feature>
<feature type="strand" evidence="21">
    <location>
        <begin position="731"/>
        <end position="734"/>
    </location>
</feature>
<feature type="strand" evidence="21">
    <location>
        <begin position="741"/>
        <end position="749"/>
    </location>
</feature>
<feature type="turn" evidence="18">
    <location>
        <begin position="752"/>
        <end position="754"/>
    </location>
</feature>
<feature type="strand" evidence="21">
    <location>
        <begin position="757"/>
        <end position="762"/>
    </location>
</feature>
<feature type="strand" evidence="21">
    <location>
        <begin position="764"/>
        <end position="766"/>
    </location>
</feature>
<feature type="strand" evidence="21">
    <location>
        <begin position="769"/>
        <end position="774"/>
    </location>
</feature>
<feature type="strand" evidence="21">
    <location>
        <begin position="776"/>
        <end position="786"/>
    </location>
</feature>
<feature type="strand" evidence="21">
    <location>
        <begin position="788"/>
        <end position="797"/>
    </location>
</feature>
<feature type="turn" evidence="21">
    <location>
        <begin position="798"/>
        <end position="801"/>
    </location>
</feature>
<feature type="strand" evidence="21">
    <location>
        <begin position="802"/>
        <end position="811"/>
    </location>
</feature>
<feature type="strand" evidence="21">
    <location>
        <begin position="820"/>
        <end position="822"/>
    </location>
</feature>
<feature type="strand" evidence="21">
    <location>
        <begin position="824"/>
        <end position="826"/>
    </location>
</feature>
<feature type="strand" evidence="21">
    <location>
        <begin position="832"/>
        <end position="839"/>
    </location>
</feature>
<feature type="strand" evidence="21">
    <location>
        <begin position="847"/>
        <end position="849"/>
    </location>
</feature>
<feature type="strand" evidence="20">
    <location>
        <begin position="853"/>
        <end position="855"/>
    </location>
</feature>
<feature type="strand" evidence="21">
    <location>
        <begin position="860"/>
        <end position="864"/>
    </location>
</feature>
<feature type="strand" evidence="21">
    <location>
        <begin position="866"/>
        <end position="868"/>
    </location>
</feature>
<feature type="strand" evidence="21">
    <location>
        <begin position="870"/>
        <end position="874"/>
    </location>
</feature>
<feature type="turn" evidence="21">
    <location>
        <begin position="875"/>
        <end position="878"/>
    </location>
</feature>
<feature type="helix" evidence="21">
    <location>
        <begin position="888"/>
        <end position="893"/>
    </location>
</feature>
<feature type="strand" evidence="21">
    <location>
        <begin position="906"/>
        <end position="908"/>
    </location>
</feature>
<feature type="strand" evidence="18">
    <location>
        <begin position="910"/>
        <end position="913"/>
    </location>
</feature>
<feature type="strand" evidence="21">
    <location>
        <begin position="917"/>
        <end position="926"/>
    </location>
</feature>
<feature type="strand" evidence="21">
    <location>
        <begin position="928"/>
        <end position="931"/>
    </location>
</feature>
<feature type="strand" evidence="21">
    <location>
        <begin position="933"/>
        <end position="947"/>
    </location>
</feature>
<feature type="strand" evidence="21">
    <location>
        <begin position="949"/>
        <end position="951"/>
    </location>
</feature>
<feature type="strand" evidence="21">
    <location>
        <begin position="953"/>
        <end position="955"/>
    </location>
</feature>
<feature type="helix" evidence="21">
    <location>
        <begin position="962"/>
        <end position="992"/>
    </location>
</feature>
<accession>Q8N766</accession>
<accession>A8K6F3</accession>
<accession>Q14700</accession>
<accession>Q5TG62</accession>
<accession>Q63HL0</accession>
<accession>Q63HL3</accession>
<accession>Q8NBH8</accession>
<evidence type="ECO:0000269" key="1">
    <source>
    </source>
</evidence>
<evidence type="ECO:0000269" key="2">
    <source>
    </source>
</evidence>
<evidence type="ECO:0000269" key="3">
    <source>
    </source>
</evidence>
<evidence type="ECO:0000269" key="4">
    <source>
    </source>
</evidence>
<evidence type="ECO:0000269" key="5">
    <source>
    </source>
</evidence>
<evidence type="ECO:0000269" key="6">
    <source>
    </source>
</evidence>
<evidence type="ECO:0000269" key="7">
    <source>
    </source>
</evidence>
<evidence type="ECO:0000269" key="8">
    <source>
    </source>
</evidence>
<evidence type="ECO:0000269" key="9">
    <source>
    </source>
</evidence>
<evidence type="ECO:0000269" key="10">
    <source>
    </source>
</evidence>
<evidence type="ECO:0000269" key="11">
    <source>
    </source>
</evidence>
<evidence type="ECO:0000303" key="12">
    <source>
    </source>
</evidence>
<evidence type="ECO:0000303" key="13">
    <source>
    </source>
</evidence>
<evidence type="ECO:0000303" key="14">
    <source>
    </source>
</evidence>
<evidence type="ECO:0000305" key="15"/>
<evidence type="ECO:0007744" key="16">
    <source>
        <dbReference type="PDB" id="6WW7"/>
    </source>
</evidence>
<evidence type="ECO:0007744" key="17">
    <source>
        <dbReference type="PDB" id="6Z3W"/>
    </source>
</evidence>
<evidence type="ECO:0007829" key="18">
    <source>
        <dbReference type="PDB" id="6WW7"/>
    </source>
</evidence>
<evidence type="ECO:0007829" key="19">
    <source>
        <dbReference type="PDB" id="7ADO"/>
    </source>
</evidence>
<evidence type="ECO:0007829" key="20">
    <source>
        <dbReference type="PDB" id="8EOI"/>
    </source>
</evidence>
<evidence type="ECO:0007829" key="21">
    <source>
        <dbReference type="PDB" id="8J0O"/>
    </source>
</evidence>
<protein>
    <recommendedName>
        <fullName>ER membrane protein complex subunit 1</fullName>
    </recommendedName>
</protein>